<gene>
    <name type="primary">ASL1</name>
</gene>
<feature type="chain" id="PRO_0000137716" description="Delta-1 crystallin">
    <location>
        <begin position="1"/>
        <end position="466"/>
    </location>
</feature>
<feature type="sequence conflict" description="In Ref. 3; AA sequence." evidence="5" ref="3">
    <original>G</original>
    <variation>Q</variation>
    <location>
        <position position="11"/>
    </location>
</feature>
<feature type="helix" evidence="6">
    <location>
        <begin position="19"/>
        <end position="23"/>
    </location>
</feature>
<feature type="helix" evidence="6">
    <location>
        <begin position="28"/>
        <end position="33"/>
    </location>
</feature>
<feature type="helix" evidence="6">
    <location>
        <begin position="35"/>
        <end position="51"/>
    </location>
</feature>
<feature type="helix" evidence="6">
    <location>
        <begin position="57"/>
        <end position="75"/>
    </location>
</feature>
<feature type="strand" evidence="6">
    <location>
        <begin position="85"/>
        <end position="87"/>
    </location>
</feature>
<feature type="helix" evidence="6">
    <location>
        <begin position="88"/>
        <end position="100"/>
    </location>
</feature>
<feature type="helix" evidence="6">
    <location>
        <begin position="101"/>
        <end position="108"/>
    </location>
</feature>
<feature type="helix" evidence="6">
    <location>
        <begin position="113"/>
        <end position="149"/>
    </location>
</feature>
<feature type="turn" evidence="6">
    <location>
        <begin position="150"/>
        <end position="152"/>
    </location>
</feature>
<feature type="strand" evidence="6">
    <location>
        <begin position="154"/>
        <end position="159"/>
    </location>
</feature>
<feature type="strand" evidence="6">
    <location>
        <begin position="162"/>
        <end position="168"/>
    </location>
</feature>
<feature type="helix" evidence="6">
    <location>
        <begin position="169"/>
        <end position="194"/>
    </location>
</feature>
<feature type="turn" evidence="6">
    <location>
        <begin position="202"/>
        <end position="205"/>
    </location>
</feature>
<feature type="helix" evidence="6">
    <location>
        <begin position="213"/>
        <end position="220"/>
    </location>
</feature>
<feature type="strand" evidence="6">
    <location>
        <begin position="223"/>
        <end position="225"/>
    </location>
</feature>
<feature type="helix" evidence="6">
    <location>
        <begin position="229"/>
        <end position="234"/>
    </location>
</feature>
<feature type="helix" evidence="6">
    <location>
        <begin position="237"/>
        <end position="263"/>
    </location>
</feature>
<feature type="turn" evidence="6">
    <location>
        <begin position="266"/>
        <end position="268"/>
    </location>
</feature>
<feature type="strand" evidence="6">
    <location>
        <begin position="270"/>
        <end position="272"/>
    </location>
</feature>
<feature type="helix" evidence="6">
    <location>
        <begin position="275"/>
        <end position="277"/>
    </location>
</feature>
<feature type="helix" evidence="6">
    <location>
        <begin position="291"/>
        <end position="314"/>
    </location>
</feature>
<feature type="strand" evidence="7">
    <location>
        <begin position="319"/>
        <end position="321"/>
    </location>
</feature>
<feature type="helix" evidence="6">
    <location>
        <begin position="323"/>
        <end position="327"/>
    </location>
</feature>
<feature type="helix" evidence="6">
    <location>
        <begin position="328"/>
        <end position="352"/>
    </location>
</feature>
<feature type="helix" evidence="6">
    <location>
        <begin position="357"/>
        <end position="363"/>
    </location>
</feature>
<feature type="helix" evidence="6">
    <location>
        <begin position="366"/>
        <end position="369"/>
    </location>
</feature>
<feature type="helix" evidence="6">
    <location>
        <begin position="370"/>
        <end position="379"/>
    </location>
</feature>
<feature type="helix" evidence="6">
    <location>
        <begin position="384"/>
        <end position="401"/>
    </location>
</feature>
<feature type="turn" evidence="6">
    <location>
        <begin position="405"/>
        <end position="407"/>
    </location>
</feature>
<feature type="helix" evidence="6">
    <location>
        <begin position="410"/>
        <end position="414"/>
    </location>
</feature>
<feature type="helix" evidence="6">
    <location>
        <begin position="422"/>
        <end position="427"/>
    </location>
</feature>
<feature type="helix" evidence="6">
    <location>
        <begin position="430"/>
        <end position="435"/>
    </location>
</feature>
<feature type="strand" evidence="6">
    <location>
        <begin position="442"/>
        <end position="444"/>
    </location>
</feature>
<feature type="helix" evidence="6">
    <location>
        <begin position="445"/>
        <end position="463"/>
    </location>
</feature>
<accession>P24057</accession>
<keyword id="KW-0002">3D-structure</keyword>
<keyword id="KW-0903">Direct protein sequencing</keyword>
<keyword id="KW-0273">Eye lens protein</keyword>
<name>ARLY1_ANAPL</name>
<comment type="function">
    <text evidence="4">Delta crystallin, the principal crystallin in embryonic lens, is found only in birds and reptiles. Despite possessing the necessary catalytic residues, this protein does not function as an enzymatically active argininosuccinate lyase.</text>
</comment>
<comment type="subunit">
    <text evidence="1 2">Homotetramer.</text>
</comment>
<comment type="tissue specificity">
    <text evidence="3">Eye lens.</text>
</comment>
<comment type="similarity">
    <text evidence="5">Belongs to the lyase 1 family. Argininosuccinate lyase subfamily.</text>
</comment>
<protein>
    <recommendedName>
        <fullName>Delta-1 crystallin</fullName>
    </recommendedName>
    <alternativeName>
        <fullName>Delta crystallin I</fullName>
    </alternativeName>
</protein>
<organism>
    <name type="scientific">Anas platyrhynchos</name>
    <name type="common">Mallard</name>
    <name type="synonym">Anas boschas</name>
    <dbReference type="NCBI Taxonomy" id="8839"/>
    <lineage>
        <taxon>Eukaryota</taxon>
        <taxon>Metazoa</taxon>
        <taxon>Chordata</taxon>
        <taxon>Craniata</taxon>
        <taxon>Vertebrata</taxon>
        <taxon>Euteleostomi</taxon>
        <taxon>Archelosauria</taxon>
        <taxon>Archosauria</taxon>
        <taxon>Dinosauria</taxon>
        <taxon>Saurischia</taxon>
        <taxon>Theropoda</taxon>
        <taxon>Coelurosauria</taxon>
        <taxon>Aves</taxon>
        <taxon>Neognathae</taxon>
        <taxon>Galloanserae</taxon>
        <taxon>Anseriformes</taxon>
        <taxon>Anatidae</taxon>
        <taxon>Anatinae</taxon>
        <taxon>Anas</taxon>
    </lineage>
</organism>
<dbReference type="EMBL" id="M35133">
    <property type="protein sequence ID" value="AAC31659.1"/>
    <property type="molecule type" value="mRNA"/>
</dbReference>
<dbReference type="PIR" id="JU0452">
    <property type="entry name" value="CYDKD1"/>
</dbReference>
<dbReference type="RefSeq" id="NP_001297344.1">
    <property type="nucleotide sequence ID" value="NM_001310415.1"/>
</dbReference>
<dbReference type="RefSeq" id="XP_012963492.1">
    <property type="nucleotide sequence ID" value="XM_013108038.1"/>
</dbReference>
<dbReference type="PDB" id="1HY0">
    <property type="method" value="X-ray"/>
    <property type="resolution" value="2.20 A"/>
    <property type="chains" value="A/B=1-466"/>
</dbReference>
<dbReference type="PDB" id="1U15">
    <property type="method" value="X-ray"/>
    <property type="resolution" value="2.50 A"/>
    <property type="chains" value="A/B/C/D=1-466"/>
</dbReference>
<dbReference type="PDB" id="1U16">
    <property type="method" value="X-ray"/>
    <property type="resolution" value="2.20 A"/>
    <property type="chains" value="A=1-466"/>
</dbReference>
<dbReference type="PDBsum" id="1HY0"/>
<dbReference type="PDBsum" id="1U15"/>
<dbReference type="PDBsum" id="1U16"/>
<dbReference type="SMR" id="P24057"/>
<dbReference type="Ensembl" id="ENSAPLT00020025514.1">
    <property type="protein sequence ID" value="ENSAPLP00020023645.1"/>
    <property type="gene ID" value="ENSAPLG00020016403.1"/>
</dbReference>
<dbReference type="GeneID" id="101796068"/>
<dbReference type="KEGG" id="apla:101796068"/>
<dbReference type="CTD" id="435"/>
<dbReference type="OrthoDB" id="2561043at2759"/>
<dbReference type="SABIO-RK" id="P24057"/>
<dbReference type="EvolutionaryTrace" id="P24057"/>
<dbReference type="Proteomes" id="UP000694400">
    <property type="component" value="Chromosome 20"/>
</dbReference>
<dbReference type="GO" id="GO:0005829">
    <property type="term" value="C:cytosol"/>
    <property type="evidence" value="ECO:0007669"/>
    <property type="project" value="TreeGrafter"/>
</dbReference>
<dbReference type="GO" id="GO:0003824">
    <property type="term" value="F:catalytic activity"/>
    <property type="evidence" value="ECO:0007669"/>
    <property type="project" value="InterPro"/>
</dbReference>
<dbReference type="GO" id="GO:0005212">
    <property type="term" value="F:structural constituent of eye lens"/>
    <property type="evidence" value="ECO:0000304"/>
    <property type="project" value="UniProtKB"/>
</dbReference>
<dbReference type="GO" id="GO:0042450">
    <property type="term" value="P:arginine biosynthetic process via ornithine"/>
    <property type="evidence" value="ECO:0007669"/>
    <property type="project" value="InterPro"/>
</dbReference>
<dbReference type="CDD" id="cd01359">
    <property type="entry name" value="Argininosuccinate_lyase"/>
    <property type="match status" value="1"/>
</dbReference>
<dbReference type="FunFam" id="1.10.275.10:FF:000002">
    <property type="entry name" value="Argininosuccinate lyase"/>
    <property type="match status" value="1"/>
</dbReference>
<dbReference type="FunFam" id="1.10.40.30:FF:000001">
    <property type="entry name" value="Argininosuccinate lyase"/>
    <property type="match status" value="1"/>
</dbReference>
<dbReference type="FunFam" id="1.20.200.10:FF:000002">
    <property type="entry name" value="Argininosuccinate lyase"/>
    <property type="match status" value="1"/>
</dbReference>
<dbReference type="FunFam" id="1.20.200.10:FF:000015">
    <property type="entry name" value="argininosuccinate lyase isoform X2"/>
    <property type="match status" value="1"/>
</dbReference>
<dbReference type="Gene3D" id="1.10.40.30">
    <property type="entry name" value="Fumarase/aspartase (C-terminal domain)"/>
    <property type="match status" value="1"/>
</dbReference>
<dbReference type="Gene3D" id="1.20.200.10">
    <property type="entry name" value="Fumarase/aspartase (Central domain)"/>
    <property type="match status" value="1"/>
</dbReference>
<dbReference type="Gene3D" id="1.10.275.10">
    <property type="entry name" value="Fumarase/aspartase (N-terminal domain)"/>
    <property type="match status" value="1"/>
</dbReference>
<dbReference type="HAMAP" id="MF_00006">
    <property type="entry name" value="Arg_succ_lyase"/>
    <property type="match status" value="1"/>
</dbReference>
<dbReference type="InterPro" id="IPR029419">
    <property type="entry name" value="Arg_succ_lyase_C"/>
</dbReference>
<dbReference type="InterPro" id="IPR009049">
    <property type="entry name" value="Argininosuccinate_lyase"/>
</dbReference>
<dbReference type="InterPro" id="IPR024083">
    <property type="entry name" value="Fumarase/histidase_N"/>
</dbReference>
<dbReference type="InterPro" id="IPR020557">
    <property type="entry name" value="Fumarate_lyase_CS"/>
</dbReference>
<dbReference type="InterPro" id="IPR000362">
    <property type="entry name" value="Fumarate_lyase_fam"/>
</dbReference>
<dbReference type="InterPro" id="IPR022761">
    <property type="entry name" value="Fumarate_lyase_N"/>
</dbReference>
<dbReference type="InterPro" id="IPR008948">
    <property type="entry name" value="L-Aspartase-like"/>
</dbReference>
<dbReference type="NCBIfam" id="TIGR00838">
    <property type="entry name" value="argH"/>
    <property type="match status" value="1"/>
</dbReference>
<dbReference type="PANTHER" id="PTHR43814">
    <property type="entry name" value="ARGININOSUCCINATE LYASE"/>
    <property type="match status" value="1"/>
</dbReference>
<dbReference type="PANTHER" id="PTHR43814:SF1">
    <property type="entry name" value="ARGININOSUCCINATE LYASE"/>
    <property type="match status" value="1"/>
</dbReference>
<dbReference type="Pfam" id="PF14698">
    <property type="entry name" value="ASL_C2"/>
    <property type="match status" value="1"/>
</dbReference>
<dbReference type="Pfam" id="PF00206">
    <property type="entry name" value="Lyase_1"/>
    <property type="match status" value="1"/>
</dbReference>
<dbReference type="PRINTS" id="PR00145">
    <property type="entry name" value="ARGSUCLYASE"/>
</dbReference>
<dbReference type="PRINTS" id="PR00149">
    <property type="entry name" value="FUMRATELYASE"/>
</dbReference>
<dbReference type="SUPFAM" id="SSF48557">
    <property type="entry name" value="L-aspartase-like"/>
    <property type="match status" value="1"/>
</dbReference>
<dbReference type="PROSITE" id="PS00163">
    <property type="entry name" value="FUMARATE_LYASES"/>
    <property type="match status" value="1"/>
</dbReference>
<reference key="1">
    <citation type="journal article" date="1990" name="Gene">
        <title>Gene conversion and splice-site slippage in the argininosuccinate lyases/delta-crystallins of the duck lens: members of an enzyme superfamily.</title>
        <authorList>
            <person name="Wistow G.J."/>
            <person name="Piatigorsky J."/>
        </authorList>
    </citation>
    <scope>NUCLEOTIDE SEQUENCE [MRNA]</scope>
    <scope>TISSUE SPECIFICITY</scope>
    <source>
        <tissue>Lens</tissue>
    </source>
</reference>
<reference key="2">
    <citation type="journal article" date="1987" name="J. Mol. Evol.">
        <title>Conservation of delta-crystallin gene structure between ducks and chickens.</title>
        <authorList>
            <person name="Piatigorsky J."/>
            <person name="Norman B."/>
            <person name="Jones R.E."/>
        </authorList>
    </citation>
    <scope>NUCLEOTIDE SEQUENCE [MRNA] OF 1-54</scope>
</reference>
<reference key="3">
    <citation type="journal article" date="1994" name="Arch. Biochem. Biophys.">
        <title>Characterization of the multiple forms of duck lens delta-crystallin with endogenous argininosuccinate lyase activity.</title>
        <authorList>
            <person name="Lee H.J."/>
            <person name="Lin C.C."/>
            <person name="Chiou S.-H."/>
            <person name="Chang G.G."/>
        </authorList>
    </citation>
    <scope>PROTEIN SEQUENCE OF 8-21</scope>
    <scope>FUNCTION</scope>
    <source>
        <tissue>Lens</tissue>
    </source>
</reference>
<reference key="4">
    <citation type="journal article" date="2001" name="Biochemistry">
        <title>Structural studies of duck delta 1 and delta 2 crystallin suggest conformational changes occur during catalysis.</title>
        <authorList>
            <person name="Sampaleanu L.M."/>
            <person name="Vallee F."/>
            <person name="Slingsby C."/>
            <person name="Howell P.L."/>
        </authorList>
    </citation>
    <scope>X-RAY CRYSTALLOGRAPHY (2.2 ANGSTROMS)</scope>
    <scope>SUBUNIT</scope>
</reference>
<reference key="5">
    <citation type="journal article" date="2004" name="Biochemistry">
        <title>A duck delta1 crystallin double loop mutant provides insight into residues important for argininosuccinate lyase activity.</title>
        <authorList>
            <person name="Tsai M."/>
            <person name="Sampaleanu L.M."/>
            <person name="Greene C."/>
            <person name="Creagh L."/>
            <person name="Haynes C."/>
            <person name="Howell P.L."/>
        </authorList>
    </citation>
    <scope>X-RAY CRYSTALLOGRAPHY (2.2 ANGSTROMS)</scope>
    <scope>SUBUNIT</scope>
</reference>
<evidence type="ECO:0000269" key="1">
    <source>
    </source>
</evidence>
<evidence type="ECO:0000269" key="2">
    <source>
    </source>
</evidence>
<evidence type="ECO:0000269" key="3">
    <source>
    </source>
</evidence>
<evidence type="ECO:0000269" key="4">
    <source>
    </source>
</evidence>
<evidence type="ECO:0000305" key="5"/>
<evidence type="ECO:0007829" key="6">
    <source>
        <dbReference type="PDB" id="1HY0"/>
    </source>
</evidence>
<evidence type="ECO:0007829" key="7">
    <source>
        <dbReference type="PDB" id="1U15"/>
    </source>
</evidence>
<proteinExistence type="evidence at protein level"/>
<sequence length="466" mass="51136">MASEGDKLMGGRFVGSTDPIMQMLSTSISTEQRLSEVDIQASIAYAKALEKAGILTKTELEKILSGLEKISEELSKGVIVVTQSDEDIQTANERRLKELIGDIAGKLHTGRSRNEQVVTDLKLFMKNSLSIISTHLLQLIKTLVERAAIEIDVILPGYTHLQKAQPIRWSQFLLSHAVALTRDSERLGEVKKRINVLPLGSGALAGNPLDIDREMLRSELEFASISLNSMDAISERDFVVEFLSVATLLLIHLSKMAEDLIIYSTSEFGFLTLSDAFSTGSSLMPQKKNPDSLELIRSKAGRVFGRLASILMVLKGLPSTYNKDLQEDKEAVIDVVDTLTAVLQVATGVISTLQISKENMEKALTPEMLATDLALYLVRKGMPFRQAHTASGKAVHLAETKGIAINNLTLEDLKSISPLFSSDVSQVFNFVNSVEQYTALGGTAKSSVTTQIEQLRELMKKQKEQA</sequence>